<feature type="initiator methionine" description="Removed" evidence="1">
    <location>
        <position position="1"/>
    </location>
</feature>
<feature type="chain" id="PRO_0000054452" description="Alcohol dehydrogenase">
    <location>
        <begin position="2"/>
        <end position="254"/>
    </location>
</feature>
<feature type="active site" description="Proton acceptor" evidence="2">
    <location>
        <position position="151"/>
    </location>
</feature>
<feature type="binding site" evidence="1">
    <location>
        <begin position="10"/>
        <end position="33"/>
    </location>
    <ligand>
        <name>NAD(+)</name>
        <dbReference type="ChEBI" id="CHEBI:57540"/>
    </ligand>
</feature>
<feature type="binding site" evidence="1">
    <location>
        <position position="138"/>
    </location>
    <ligand>
        <name>substrate</name>
    </ligand>
</feature>
<sequence>MVIANSNVIFVAGLGGIGLDTSREIVKSGPKNLVVLDRVDNPAAIAELKALNPKVTVTFYPYDVTVPLAETKKLLKTIFDKLKTVDLLINGAGILDDNQIERTIAVNFTGTVNTTTAIMDFWDKRKGGPGGVVANICSVTGFNSIYQVPVYSASKAAALSFTTSIAKLAHITGVTAYSINPGITKTVLVHKFNSWLSVEPRVAELLLEHPTQTTLQCAQNFVKAIEANQNGAIWKLDLGRLDAIEWTKHWDSGI</sequence>
<name>ADH_DROAF</name>
<keyword id="KW-0520">NAD</keyword>
<keyword id="KW-0560">Oxidoreductase</keyword>
<protein>
    <recommendedName>
        <fullName>Alcohol dehydrogenase</fullName>
        <ecNumber>1.1.1.1</ecNumber>
    </recommendedName>
</protein>
<evidence type="ECO:0000250" key="1"/>
<evidence type="ECO:0000255" key="2">
    <source>
        <dbReference type="PROSITE-ProRule" id="PRU10001"/>
    </source>
</evidence>
<evidence type="ECO:0000305" key="3"/>
<comment type="catalytic activity">
    <reaction evidence="2">
        <text>a primary alcohol + NAD(+) = an aldehyde + NADH + H(+)</text>
        <dbReference type="Rhea" id="RHEA:10736"/>
        <dbReference type="ChEBI" id="CHEBI:15378"/>
        <dbReference type="ChEBI" id="CHEBI:15734"/>
        <dbReference type="ChEBI" id="CHEBI:17478"/>
        <dbReference type="ChEBI" id="CHEBI:57540"/>
        <dbReference type="ChEBI" id="CHEBI:57945"/>
        <dbReference type="EC" id="1.1.1.1"/>
    </reaction>
</comment>
<comment type="catalytic activity">
    <reaction evidence="2">
        <text>a secondary alcohol + NAD(+) = a ketone + NADH + H(+)</text>
        <dbReference type="Rhea" id="RHEA:10740"/>
        <dbReference type="ChEBI" id="CHEBI:15378"/>
        <dbReference type="ChEBI" id="CHEBI:17087"/>
        <dbReference type="ChEBI" id="CHEBI:35681"/>
        <dbReference type="ChEBI" id="CHEBI:57540"/>
        <dbReference type="ChEBI" id="CHEBI:57945"/>
        <dbReference type="EC" id="1.1.1.1"/>
    </reaction>
</comment>
<comment type="subunit">
    <text>Homodimer.</text>
</comment>
<comment type="similarity">
    <text evidence="3">Belongs to the short-chain dehydrogenases/reductases (SDR) family.</text>
</comment>
<proteinExistence type="evidence at transcript level"/>
<organism>
    <name type="scientific">Drosophila affinidisjuncta</name>
    <name type="common">Fruit fly</name>
    <name type="synonym">Idiomyia affinidisjuncta</name>
    <dbReference type="NCBI Taxonomy" id="7262"/>
    <lineage>
        <taxon>Eukaryota</taxon>
        <taxon>Metazoa</taxon>
        <taxon>Ecdysozoa</taxon>
        <taxon>Arthropoda</taxon>
        <taxon>Hexapoda</taxon>
        <taxon>Insecta</taxon>
        <taxon>Pterygota</taxon>
        <taxon>Neoptera</taxon>
        <taxon>Endopterygota</taxon>
        <taxon>Diptera</taxon>
        <taxon>Brachycera</taxon>
        <taxon>Muscomorpha</taxon>
        <taxon>Ephydroidea</taxon>
        <taxon>Drosophilidae</taxon>
        <taxon>Drosophila</taxon>
        <taxon>Hawaiian Drosophila</taxon>
    </lineage>
</organism>
<reference key="1">
    <citation type="journal article" date="1988" name="J. Mol. Evol.">
        <title>Nucleotide sequence of the genomic region encoding alcohol dehydrogenase in Drosophila affinidisjuncta.</title>
        <authorList>
            <person name="Rowan R.G."/>
            <person name="Dickinson W.J."/>
        </authorList>
    </citation>
    <scope>NUCLEOTIDE SEQUENCE</scope>
</reference>
<reference key="2">
    <citation type="submission" date="1996-09" db="EMBL/GenBank/DDBJ databases">
        <authorList>
            <person name="McKenzie R.W."/>
            <person name="Brennan M.D."/>
        </authorList>
    </citation>
    <scope>NUCLEOTIDE SEQUENCE</scope>
    <source>
        <strain>S36G1</strain>
    </source>
</reference>
<dbReference type="EC" id="1.1.1.1"/>
<dbReference type="EMBL" id="X13812">
    <property type="protein sequence ID" value="CAA32041.1"/>
    <property type="molecule type" value="Genomic_DNA"/>
</dbReference>
<dbReference type="EMBL" id="M37262">
    <property type="protein sequence ID" value="AAA28336.1"/>
    <property type="molecule type" value="Genomic_DNA"/>
</dbReference>
<dbReference type="EMBL" id="U63563">
    <property type="protein sequence ID" value="AAB07872.1"/>
    <property type="molecule type" value="mRNA"/>
</dbReference>
<dbReference type="SMR" id="P21518"/>
<dbReference type="FlyBase" id="FBgn0012073">
    <property type="gene designation" value="Daff\Adh"/>
</dbReference>
<dbReference type="GO" id="GO:0005737">
    <property type="term" value="C:cytoplasm"/>
    <property type="evidence" value="ECO:0007669"/>
    <property type="project" value="TreeGrafter"/>
</dbReference>
<dbReference type="GO" id="GO:0004022">
    <property type="term" value="F:alcohol dehydrogenase (NAD+) activity"/>
    <property type="evidence" value="ECO:0000250"/>
    <property type="project" value="UniProtKB"/>
</dbReference>
<dbReference type="GO" id="GO:0006066">
    <property type="term" value="P:alcohol metabolic process"/>
    <property type="evidence" value="ECO:0007669"/>
    <property type="project" value="InterPro"/>
</dbReference>
<dbReference type="CDD" id="cd05323">
    <property type="entry name" value="ADH_SDR_c_like"/>
    <property type="match status" value="1"/>
</dbReference>
<dbReference type="FunFam" id="3.40.50.720:FF:000302">
    <property type="entry name" value="Alcohol dehydrogenase"/>
    <property type="match status" value="1"/>
</dbReference>
<dbReference type="Gene3D" id="3.40.50.720">
    <property type="entry name" value="NAD(P)-binding Rossmann-like Domain"/>
    <property type="match status" value="1"/>
</dbReference>
<dbReference type="InterPro" id="IPR002425">
    <property type="entry name" value="ADH_Drosophila-type"/>
</dbReference>
<dbReference type="InterPro" id="IPR036291">
    <property type="entry name" value="NAD(P)-bd_dom_sf"/>
</dbReference>
<dbReference type="InterPro" id="IPR020904">
    <property type="entry name" value="Sc_DH/Rdtase_CS"/>
</dbReference>
<dbReference type="InterPro" id="IPR002347">
    <property type="entry name" value="SDR_fam"/>
</dbReference>
<dbReference type="PANTHER" id="PTHR44229">
    <property type="entry name" value="15-HYDROXYPROSTAGLANDIN DEHYDROGENASE [NAD(+)]"/>
    <property type="match status" value="1"/>
</dbReference>
<dbReference type="PANTHER" id="PTHR44229:SF8">
    <property type="entry name" value="ALCOHOL DEHYDROGENASE-RELATED"/>
    <property type="match status" value="1"/>
</dbReference>
<dbReference type="Pfam" id="PF00106">
    <property type="entry name" value="adh_short"/>
    <property type="match status" value="1"/>
</dbReference>
<dbReference type="PRINTS" id="PR01168">
    <property type="entry name" value="ALCDHDRGNASE"/>
</dbReference>
<dbReference type="PRINTS" id="PR01167">
    <property type="entry name" value="INSADHFAMILY"/>
</dbReference>
<dbReference type="PRINTS" id="PR00080">
    <property type="entry name" value="SDRFAMILY"/>
</dbReference>
<dbReference type="SUPFAM" id="SSF51735">
    <property type="entry name" value="NAD(P)-binding Rossmann-fold domains"/>
    <property type="match status" value="1"/>
</dbReference>
<dbReference type="PROSITE" id="PS00061">
    <property type="entry name" value="ADH_SHORT"/>
    <property type="match status" value="1"/>
</dbReference>
<gene>
    <name type="primary">Adh</name>
</gene>
<accession>P21518</accession>